<proteinExistence type="inferred from homology"/>
<keyword id="KW-0031">Aminopeptidase</keyword>
<keyword id="KW-0963">Cytoplasm</keyword>
<keyword id="KW-0378">Hydrolase</keyword>
<keyword id="KW-0645">Protease</keyword>
<keyword id="KW-0720">Serine protease</keyword>
<accession>C1CRZ9</accession>
<protein>
    <recommendedName>
        <fullName evidence="1">Xaa-Pro dipeptidyl-peptidase</fullName>
        <ecNumber evidence="1">3.4.14.11</ecNumber>
    </recommendedName>
    <alternativeName>
        <fullName evidence="1">X-Pro dipeptidyl-peptidase</fullName>
    </alternativeName>
    <alternativeName>
        <fullName evidence="1">X-prolyl-dipeptidyl aminopeptidase</fullName>
        <shortName evidence="1">X-PDAP</shortName>
    </alternativeName>
</protein>
<comment type="function">
    <text evidence="1">Removes N-terminal dipeptides sequentially from polypeptides having unsubstituted N-termini provided that the penultimate residue is proline.</text>
</comment>
<comment type="catalytic activity">
    <reaction evidence="1">
        <text>Hydrolyzes Xaa-Pro-|- bonds to release unblocked, N-terminal dipeptides from substrates including Ala-Pro-|-p-nitroanilide and (sequentially) Tyr-Pro-|-Phe-Pro-|-Gly-Pro-|-Ile.</text>
        <dbReference type="EC" id="3.4.14.11"/>
    </reaction>
</comment>
<comment type="subunit">
    <text evidence="1">Homodimer.</text>
</comment>
<comment type="subcellular location">
    <subcellularLocation>
        <location evidence="1">Cytoplasm</location>
    </subcellularLocation>
</comment>
<comment type="similarity">
    <text evidence="1">Belongs to the peptidase S15 family.</text>
</comment>
<feature type="chain" id="PRO_1000192761" description="Xaa-Pro dipeptidyl-peptidase">
    <location>
        <begin position="1"/>
        <end position="757"/>
    </location>
</feature>
<feature type="active site" description="Charge relay system" evidence="1">
    <location>
        <position position="348"/>
    </location>
</feature>
<feature type="active site" description="Charge relay system" evidence="1">
    <location>
        <position position="468"/>
    </location>
</feature>
<feature type="active site" description="Charge relay system" evidence="1">
    <location>
        <position position="498"/>
    </location>
</feature>
<gene>
    <name evidence="1" type="primary">pepX</name>
    <name type="ordered locus">SPT_1305</name>
</gene>
<reference key="1">
    <citation type="journal article" date="2010" name="Genome Biol.">
        <title>Structure and dynamics of the pan-genome of Streptococcus pneumoniae and closely related species.</title>
        <authorList>
            <person name="Donati C."/>
            <person name="Hiller N.L."/>
            <person name="Tettelin H."/>
            <person name="Muzzi A."/>
            <person name="Croucher N.J."/>
            <person name="Angiuoli S.V."/>
            <person name="Oggioni M."/>
            <person name="Dunning Hotopp J.C."/>
            <person name="Hu F.Z."/>
            <person name="Riley D.R."/>
            <person name="Covacci A."/>
            <person name="Mitchell T.J."/>
            <person name="Bentley S.D."/>
            <person name="Kilian M."/>
            <person name="Ehrlich G.D."/>
            <person name="Rappuoli R."/>
            <person name="Moxon E.R."/>
            <person name="Masignani V."/>
        </authorList>
    </citation>
    <scope>NUCLEOTIDE SEQUENCE [LARGE SCALE GENOMIC DNA]</scope>
    <source>
        <strain>Taiwan19F-14</strain>
    </source>
</reference>
<sequence length="757" mass="86885">MRFNQYSYINFPKENVLSELKKCGFDLQNTANHKDSLETFLRRFFFTYQDTNYPLSILAADKKTDLLTFFQSEDELTADIFYTVAFQLLGFSYLVDFEDSDVFRKETGFPIIYGDLIENLYQLLNTRTKKGNTLIDQLVSDGLIPEDNDYHYFNGKSLATFSNQDVIREVVYVESRVDTDQKGLSDLVKVSIIRPRFDGKIPAIMTASPYHQGTNDKASDKALYKMEGELEVKLPHKIELEKPQLNLVQPQGKAELIAEAEEKLTHINSSYTLNDYFLPRGFANLYVSGVGTKDSTGFMTNGDYQQIEAYKNVIDWLNGRCRAFTDHTRQRQVKADWSNGKVATTGLSYLGTMSNGLATTGVDGLEVIIAEAGISSWYNYYRENGLVTSPGGYPGEDFDSLAELTYSRNLLAGDYIRGNEAHQADLEKVKAQLDRKTGDYNQFWHDRNYLLNAHKVKAEVVFTHGSQDWNVKPLHVYQMFHALPTHIHKHLFFHNGAHVYMNNWQSIDFRESINALLTKKLLGQETDFQLPTVIWQDNTAPQTWLSLDNFGGQENCETFSLGQEEQAIQNQYPDKDFERYGKTYQTFNTELYQGKANQITINLPVTKDLHLNGRAQLNLRIKSSTNKGLLSAQLLEFGQKKYLQPYPAILSARTIDNGRYHMLENLCELPFRPEAQRVVTKGYLNLQNRNDLLLVEDITADEWMDVQFELQPTIYKLKEGDTLRLVLYTTDFEITIRDNTDYHLTVDLAQSMLTLPC</sequence>
<dbReference type="EC" id="3.4.14.11" evidence="1"/>
<dbReference type="EMBL" id="CP000921">
    <property type="protein sequence ID" value="ACO22225.1"/>
    <property type="molecule type" value="Genomic_DNA"/>
</dbReference>
<dbReference type="RefSeq" id="WP_001212037.1">
    <property type="nucleotide sequence ID" value="NC_012469.1"/>
</dbReference>
<dbReference type="SMR" id="C1CRZ9"/>
<dbReference type="ESTHER" id="strpn-pepx">
    <property type="family name" value="Lactobacillus_peptidase"/>
</dbReference>
<dbReference type="MEROPS" id="S15.001"/>
<dbReference type="KEGG" id="snt:SPT_1305"/>
<dbReference type="HOGENOM" id="CLU_011800_0_0_9"/>
<dbReference type="GO" id="GO:0005737">
    <property type="term" value="C:cytoplasm"/>
    <property type="evidence" value="ECO:0007669"/>
    <property type="project" value="UniProtKB-SubCell"/>
</dbReference>
<dbReference type="GO" id="GO:0004177">
    <property type="term" value="F:aminopeptidase activity"/>
    <property type="evidence" value="ECO:0007669"/>
    <property type="project" value="UniProtKB-KW"/>
</dbReference>
<dbReference type="GO" id="GO:0008239">
    <property type="term" value="F:dipeptidyl-peptidase activity"/>
    <property type="evidence" value="ECO:0007669"/>
    <property type="project" value="UniProtKB-UniRule"/>
</dbReference>
<dbReference type="GO" id="GO:0008236">
    <property type="term" value="F:serine-type peptidase activity"/>
    <property type="evidence" value="ECO:0007669"/>
    <property type="project" value="UniProtKB-KW"/>
</dbReference>
<dbReference type="GO" id="GO:0006508">
    <property type="term" value="P:proteolysis"/>
    <property type="evidence" value="ECO:0007669"/>
    <property type="project" value="UniProtKB-KW"/>
</dbReference>
<dbReference type="Gene3D" id="1.10.246.70">
    <property type="match status" value="1"/>
</dbReference>
<dbReference type="Gene3D" id="3.40.50.1820">
    <property type="entry name" value="alpha/beta hydrolase"/>
    <property type="match status" value="1"/>
</dbReference>
<dbReference type="Gene3D" id="2.60.120.260">
    <property type="entry name" value="Galactose-binding domain-like"/>
    <property type="match status" value="1"/>
</dbReference>
<dbReference type="HAMAP" id="MF_00698">
    <property type="entry name" value="Aminopeptidase_S15"/>
    <property type="match status" value="1"/>
</dbReference>
<dbReference type="InterPro" id="IPR029058">
    <property type="entry name" value="AB_hydrolase_fold"/>
</dbReference>
<dbReference type="InterPro" id="IPR008979">
    <property type="entry name" value="Galactose-bd-like_sf"/>
</dbReference>
<dbReference type="InterPro" id="IPR008252">
    <property type="entry name" value="Pept_S15_Xpro"/>
</dbReference>
<dbReference type="InterPro" id="IPR015251">
    <property type="entry name" value="PepX_N_dom"/>
</dbReference>
<dbReference type="InterPro" id="IPR036313">
    <property type="entry name" value="PepX_N_dom_sf"/>
</dbReference>
<dbReference type="InterPro" id="IPR000383">
    <property type="entry name" value="Xaa-Pro-like_dom"/>
</dbReference>
<dbReference type="InterPro" id="IPR013736">
    <property type="entry name" value="Xaa-Pro_dipept_C"/>
</dbReference>
<dbReference type="InterPro" id="IPR050585">
    <property type="entry name" value="Xaa-Pro_dipeptidyl-ppase/CocE"/>
</dbReference>
<dbReference type="NCBIfam" id="NF003783">
    <property type="entry name" value="PRK05371.1-4"/>
    <property type="match status" value="1"/>
</dbReference>
<dbReference type="PANTHER" id="PTHR43056:SF10">
    <property type="entry name" value="COCE_NOND FAMILY, PUTATIVE (AFU_ORTHOLOGUE AFUA_7G00600)-RELATED"/>
    <property type="match status" value="1"/>
</dbReference>
<dbReference type="PANTHER" id="PTHR43056">
    <property type="entry name" value="PEPTIDASE S9 PROLYL OLIGOPEPTIDASE"/>
    <property type="match status" value="1"/>
</dbReference>
<dbReference type="Pfam" id="PF02129">
    <property type="entry name" value="Peptidase_S15"/>
    <property type="match status" value="1"/>
</dbReference>
<dbReference type="Pfam" id="PF08530">
    <property type="entry name" value="PepX_C"/>
    <property type="match status" value="1"/>
</dbReference>
<dbReference type="Pfam" id="PF09168">
    <property type="entry name" value="PepX_N"/>
    <property type="match status" value="1"/>
</dbReference>
<dbReference type="PRINTS" id="PR00923">
    <property type="entry name" value="LACTOPTASE"/>
</dbReference>
<dbReference type="SMART" id="SM00939">
    <property type="entry name" value="PepX_C"/>
    <property type="match status" value="1"/>
</dbReference>
<dbReference type="SMART" id="SM00940">
    <property type="entry name" value="PepX_N"/>
    <property type="match status" value="1"/>
</dbReference>
<dbReference type="SUPFAM" id="SSF53474">
    <property type="entry name" value="alpha/beta-Hydrolases"/>
    <property type="match status" value="1"/>
</dbReference>
<dbReference type="SUPFAM" id="SSF49785">
    <property type="entry name" value="Galactose-binding domain-like"/>
    <property type="match status" value="1"/>
</dbReference>
<dbReference type="SUPFAM" id="SSF81761">
    <property type="entry name" value="X-Prolyl dipeptidyl aminopeptidase PepX, N-terminal domain"/>
    <property type="match status" value="1"/>
</dbReference>
<organism>
    <name type="scientific">Streptococcus pneumoniae (strain Taiwan19F-14)</name>
    <dbReference type="NCBI Taxonomy" id="487213"/>
    <lineage>
        <taxon>Bacteria</taxon>
        <taxon>Bacillati</taxon>
        <taxon>Bacillota</taxon>
        <taxon>Bacilli</taxon>
        <taxon>Lactobacillales</taxon>
        <taxon>Streptococcaceae</taxon>
        <taxon>Streptococcus</taxon>
    </lineage>
</organism>
<name>PEPX_STRZT</name>
<evidence type="ECO:0000255" key="1">
    <source>
        <dbReference type="HAMAP-Rule" id="MF_00698"/>
    </source>
</evidence>